<protein>
    <recommendedName>
        <fullName evidence="1">Peptide chain release factor 2</fullName>
        <shortName evidence="1">RF-2</shortName>
    </recommendedName>
</protein>
<gene>
    <name evidence="1" type="primary">prfB</name>
    <name type="ordered locus">AZOSEA32970</name>
    <name type="ORF">ebA5809</name>
</gene>
<feature type="chain" id="PRO_0000166801" description="Peptide chain release factor 2">
    <location>
        <begin position="1"/>
        <end position="367"/>
    </location>
</feature>
<feature type="modified residue" description="N5-methylglutamine" evidence="1">
    <location>
        <position position="254"/>
    </location>
</feature>
<reference key="1">
    <citation type="journal article" date="2005" name="Arch. Microbiol.">
        <title>The genome sequence of an anaerobic aromatic-degrading denitrifying bacterium, strain EbN1.</title>
        <authorList>
            <person name="Rabus R."/>
            <person name="Kube M."/>
            <person name="Heider J."/>
            <person name="Beck A."/>
            <person name="Heitmann K."/>
            <person name="Widdel F."/>
            <person name="Reinhardt R."/>
        </authorList>
    </citation>
    <scope>NUCLEOTIDE SEQUENCE [LARGE SCALE GENOMIC DNA]</scope>
    <source>
        <strain>DSM 19018 / LMG 30748 / EbN1</strain>
    </source>
</reference>
<evidence type="ECO:0000255" key="1">
    <source>
        <dbReference type="HAMAP-Rule" id="MF_00094"/>
    </source>
</evidence>
<sequence length="367" mass="41546">MEAERLNAIAQQLDDLRARGRELRRYLDYDEKSSKLEEVTRALEDPAVWNNAEKAQELGKEKRQLEDVVHNLRDIESLSSDLKDLFDLAEAEDDEDTLAAVEADIGELQAKVHALEFRRMFSNPMDPNPCFIEIQAGAGGTEAQDWAGMLERMYLRYCERKGFNVELMEESEGEVAGIKGATIKVSGDYAYGFLRTETGIHRLVRKSPFDSNARRHTSFSSVFVYPEVDDSIQIDINPADLRIDTYRASGAGGQHINKTDSAVRITHEPTGVVVQCQNDRSQHKNKAEAMSMLKARLYELELRKRQSEQQKLEDSKSDIGWGHQIRSYVLDQSRIKDLRTNFEVGNTQAVLDGDLDDFIAASLKQGV</sequence>
<organism>
    <name type="scientific">Aromatoleum aromaticum (strain DSM 19018 / LMG 30748 / EbN1)</name>
    <name type="common">Azoarcus sp. (strain EbN1)</name>
    <dbReference type="NCBI Taxonomy" id="76114"/>
    <lineage>
        <taxon>Bacteria</taxon>
        <taxon>Pseudomonadati</taxon>
        <taxon>Pseudomonadota</taxon>
        <taxon>Betaproteobacteria</taxon>
        <taxon>Rhodocyclales</taxon>
        <taxon>Rhodocyclaceae</taxon>
        <taxon>Aromatoleum</taxon>
    </lineage>
</organism>
<keyword id="KW-0963">Cytoplasm</keyword>
<keyword id="KW-0488">Methylation</keyword>
<keyword id="KW-0648">Protein biosynthesis</keyword>
<keyword id="KW-1185">Reference proteome</keyword>
<accession>Q5NZU2</accession>
<proteinExistence type="inferred from homology"/>
<comment type="function">
    <text evidence="1">Peptide chain release factor 2 directs the termination of translation in response to the peptide chain termination codons UGA and UAA.</text>
</comment>
<comment type="subcellular location">
    <subcellularLocation>
        <location evidence="1">Cytoplasm</location>
    </subcellularLocation>
</comment>
<comment type="PTM">
    <text evidence="1">Methylated by PrmC. Methylation increases the termination efficiency of RF2.</text>
</comment>
<comment type="similarity">
    <text evidence="1">Belongs to the prokaryotic/mitochondrial release factor family.</text>
</comment>
<name>RF2_AROAE</name>
<dbReference type="EMBL" id="CR555306">
    <property type="protein sequence ID" value="CAI09422.1"/>
    <property type="molecule type" value="Genomic_DNA"/>
</dbReference>
<dbReference type="RefSeq" id="WP_011239085.1">
    <property type="nucleotide sequence ID" value="NC_006513.1"/>
</dbReference>
<dbReference type="SMR" id="Q5NZU2"/>
<dbReference type="STRING" id="76114.ebA5809"/>
<dbReference type="KEGG" id="eba:ebA5809"/>
<dbReference type="eggNOG" id="COG1186">
    <property type="taxonomic scope" value="Bacteria"/>
</dbReference>
<dbReference type="HOGENOM" id="CLU_220733_0_0_4"/>
<dbReference type="OrthoDB" id="9806673at2"/>
<dbReference type="Proteomes" id="UP000006552">
    <property type="component" value="Chromosome"/>
</dbReference>
<dbReference type="GO" id="GO:0005737">
    <property type="term" value="C:cytoplasm"/>
    <property type="evidence" value="ECO:0007669"/>
    <property type="project" value="UniProtKB-SubCell"/>
</dbReference>
<dbReference type="GO" id="GO:0016149">
    <property type="term" value="F:translation release factor activity, codon specific"/>
    <property type="evidence" value="ECO:0007669"/>
    <property type="project" value="UniProtKB-UniRule"/>
</dbReference>
<dbReference type="FunFam" id="3.30.160.20:FF:000010">
    <property type="entry name" value="Peptide chain release factor 2"/>
    <property type="match status" value="1"/>
</dbReference>
<dbReference type="Gene3D" id="3.30.160.20">
    <property type="match status" value="1"/>
</dbReference>
<dbReference type="Gene3D" id="3.30.70.1660">
    <property type="match status" value="1"/>
</dbReference>
<dbReference type="Gene3D" id="1.20.58.410">
    <property type="entry name" value="Release factor"/>
    <property type="match status" value="1"/>
</dbReference>
<dbReference type="HAMAP" id="MF_00094">
    <property type="entry name" value="Rel_fac_2"/>
    <property type="match status" value="1"/>
</dbReference>
<dbReference type="InterPro" id="IPR005139">
    <property type="entry name" value="PCRF"/>
</dbReference>
<dbReference type="InterPro" id="IPR000352">
    <property type="entry name" value="Pep_chain_release_fac_I"/>
</dbReference>
<dbReference type="InterPro" id="IPR045853">
    <property type="entry name" value="Pep_chain_release_fac_I_sf"/>
</dbReference>
<dbReference type="InterPro" id="IPR004374">
    <property type="entry name" value="PrfB"/>
</dbReference>
<dbReference type="NCBIfam" id="TIGR00020">
    <property type="entry name" value="prfB"/>
    <property type="match status" value="1"/>
</dbReference>
<dbReference type="PANTHER" id="PTHR43116:SF3">
    <property type="entry name" value="CLASS I PEPTIDE CHAIN RELEASE FACTOR"/>
    <property type="match status" value="1"/>
</dbReference>
<dbReference type="PANTHER" id="PTHR43116">
    <property type="entry name" value="PEPTIDE CHAIN RELEASE FACTOR 2"/>
    <property type="match status" value="1"/>
</dbReference>
<dbReference type="Pfam" id="PF03462">
    <property type="entry name" value="PCRF"/>
    <property type="match status" value="1"/>
</dbReference>
<dbReference type="Pfam" id="PF00472">
    <property type="entry name" value="RF-1"/>
    <property type="match status" value="1"/>
</dbReference>
<dbReference type="SMART" id="SM00937">
    <property type="entry name" value="PCRF"/>
    <property type="match status" value="1"/>
</dbReference>
<dbReference type="SUPFAM" id="SSF75620">
    <property type="entry name" value="Release factor"/>
    <property type="match status" value="1"/>
</dbReference>
<dbReference type="PROSITE" id="PS00745">
    <property type="entry name" value="RF_PROK_I"/>
    <property type="match status" value="1"/>
</dbReference>